<gene>
    <name evidence="2" type="primary">mtcB</name>
    <name evidence="4" type="ORF">B2M23_04725</name>
</gene>
<organism>
    <name type="scientific">Eubacterium limosum</name>
    <dbReference type="NCBI Taxonomy" id="1736"/>
    <lineage>
        <taxon>Bacteria</taxon>
        <taxon>Bacillati</taxon>
        <taxon>Bacillota</taxon>
        <taxon>Clostridia</taxon>
        <taxon>Eubacteriales</taxon>
        <taxon>Eubacteriaceae</taxon>
        <taxon>Eubacterium</taxon>
    </lineage>
</organism>
<name>MTCB_EUBLI</name>
<keyword id="KW-0489">Methyltransferase</keyword>
<keyword id="KW-0808">Transferase</keyword>
<reference key="1">
    <citation type="journal article" date="2017" name="Sci. Rep.">
        <title>Determination of the Genome and Primary Transcriptome of Syngas Fermenting Eubacterium limosum ATCC 8486.</title>
        <authorList>
            <person name="Song Y."/>
            <person name="Shin J."/>
            <person name="Jeong Y."/>
            <person name="Jin S."/>
            <person name="Lee J.K."/>
            <person name="Kim D.R."/>
            <person name="Kim S.C."/>
            <person name="Cho S."/>
            <person name="Cho B.K."/>
        </authorList>
    </citation>
    <scope>NUCLEOTIDE SEQUENCE [LARGE SCALE GENOMIC DNA]</scope>
    <source>
        <strain>ATCC 8486</strain>
    </source>
</reference>
<reference key="2">
    <citation type="journal article" date="2020" name="J. Biol. Chem.">
        <title>MtcB, a member of the MttB superfamily from the human gut acetogen Eubacterium limosum, is a cobalamin-dependent carnitine demethylase.</title>
        <authorList>
            <person name="Kountz D.J."/>
            <person name="Behrman E.J."/>
            <person name="Zhang L."/>
            <person name="Krzycki J.A."/>
        </authorList>
    </citation>
    <scope>FUNCTION</scope>
    <scope>CATALYTIC ACTIVITY</scope>
    <scope>BIOPHYSICOCHEMICAL PROPERTIES</scope>
    <scope>SUBUNIT</scope>
    <scope>INDUCTION</scope>
    <source>
        <strain>ATCC 8486</strain>
    </source>
</reference>
<sequence>MIRNSLTDVFFAKDDVENLHEGVLRVLSKVGVKIENDEALGIFEQHGARVENGTVYIGEVLLNKALQTVPANFELQGFDRTVQVGLDHDPVVIPTNGTPMVLNFDGSYSDTNTDDLVNFYKLIDTSDVMQVTSEIAVDVPGLDKTKDSLLAQTALLMKYSHKPIYNILGATIHNYKKGSVAQGVRENIQFAKKYYGYDDKYVIYSGTCVISPLGVGWEAMDHFMGFIKENQPISITACSMTNLTAPGSLYGSVVEDAAAILSIVVLSQLMNPGLPVLYTSLSSMSDMRYVQLCMGAPEFALITLGHIALANFYKIPVRVGGALGDAFKADYQAGVESFVGLMAPMLSQSAMIPHGCGTMGSFNLTSYEKFIMDEETIRYLMRLRRGFEVSDKRKEKALKDITKVGPRGNFLGGRTPKEYREDNYLASEVFNRKGCKENTREEQGDIRDRARKVYDARMEAYELPDTTLEQKKLLNTELPEQYKFDI</sequence>
<protein>
    <recommendedName>
        <fullName evidence="2">L-carnitine:corrinoid methyltransferase</fullName>
        <ecNumber evidence="1">2.1.1.383</ecNumber>
    </recommendedName>
    <alternativeName>
        <fullName evidence="2">Cobalamin-dependent carnitine demethylase</fullName>
    </alternativeName>
    <alternativeName>
        <fullName evidence="2">L-carnitine methyltransferase</fullName>
    </alternativeName>
    <alternativeName>
        <fullName evidence="3">L-carnitine--corrinoid protein Co-methyltransferase</fullName>
    </alternativeName>
</protein>
<feature type="chain" id="PRO_0000457580" description="L-carnitine:corrinoid methyltransferase">
    <location>
        <begin position="1"/>
        <end position="486"/>
    </location>
</feature>
<proteinExistence type="evidence at protein level"/>
<dbReference type="EC" id="2.1.1.383" evidence="1"/>
<dbReference type="EMBL" id="CP019962">
    <property type="protein sequence ID" value="ARD64884.1"/>
    <property type="molecule type" value="Genomic_DNA"/>
</dbReference>
<dbReference type="RefSeq" id="WP_038351887.1">
    <property type="nucleotide sequence ID" value="NZ_CP019962.1"/>
</dbReference>
<dbReference type="SMR" id="P0DX06"/>
<dbReference type="KEGG" id="elim:B2M23_04725"/>
<dbReference type="OrthoDB" id="5418352at2"/>
<dbReference type="Proteomes" id="UP000192391">
    <property type="component" value="Chromosome"/>
</dbReference>
<dbReference type="GO" id="GO:0008168">
    <property type="term" value="F:methyltransferase activity"/>
    <property type="evidence" value="ECO:0007669"/>
    <property type="project" value="UniProtKB-KW"/>
</dbReference>
<dbReference type="GO" id="GO:0015948">
    <property type="term" value="P:methanogenesis"/>
    <property type="evidence" value="ECO:0007669"/>
    <property type="project" value="InterPro"/>
</dbReference>
<dbReference type="GO" id="GO:0032259">
    <property type="term" value="P:methylation"/>
    <property type="evidence" value="ECO:0007669"/>
    <property type="project" value="UniProtKB-KW"/>
</dbReference>
<dbReference type="Gene3D" id="3.20.20.480">
    <property type="entry name" value="Trimethylamine methyltransferase-like"/>
    <property type="match status" value="1"/>
</dbReference>
<dbReference type="InterPro" id="IPR038601">
    <property type="entry name" value="MttB-like_sf"/>
</dbReference>
<dbReference type="InterPro" id="IPR010426">
    <property type="entry name" value="MTTB_MeTrfase"/>
</dbReference>
<dbReference type="Pfam" id="PF06253">
    <property type="entry name" value="MTTB"/>
    <property type="match status" value="1"/>
</dbReference>
<accession>P0DX06</accession>
<comment type="function">
    <text evidence="1">Involved in the degradation of the quaternary amine L-carnitine (PubMed:32571881). Component of a corrinoid-dependent methyltransferase system that transfers a methyl group from L-carnitine to tetrahydrofolate (THF), forming methyl-THF, a key intermediate in the Wood-Ljungdahl acetogenesis pathway (PubMed:32571881). MtcB catalyzes the methylation of the corrinoid protein MtqC, using L-carnitine as the methyl donor (PubMed:32571881). L-carnitine demethylation generates the unusual biological product norcarnitine, which is likely degraded by other members of the gut microbiota (PubMed:32571881). In vitro, can methylate free cob(I)alamin (PubMed:32571881).</text>
</comment>
<comment type="catalytic activity">
    <reaction evidence="1">
        <text>Co(I)-[quaternary-amine-specific corrinoid protein] + (R)-carnitine + H(+) = (3R)-4-(dimethylamino)-3-hydroxybutanoate + methyl-Co(III)-[quaternary-amine-specific corrinoid protein]</text>
        <dbReference type="Rhea" id="RHEA:69384"/>
        <dbReference type="Rhea" id="RHEA-COMP:17694"/>
        <dbReference type="Rhea" id="RHEA-COMP:17695"/>
        <dbReference type="ChEBI" id="CHEBI:15378"/>
        <dbReference type="ChEBI" id="CHEBI:16347"/>
        <dbReference type="ChEBI" id="CHEBI:85033"/>
        <dbReference type="ChEBI" id="CHEBI:85035"/>
        <dbReference type="ChEBI" id="CHEBI:183234"/>
        <dbReference type="EC" id="2.1.1.383"/>
    </reaction>
    <physiologicalReaction direction="left-to-right" evidence="1">
        <dbReference type="Rhea" id="RHEA:69385"/>
    </physiologicalReaction>
</comment>
<comment type="biophysicochemical properties">
    <kinetics>
        <KM evidence="1">0.4 mM for L-carnitine</KM>
        <KM evidence="1">1.34 mM for cob(I)alamin</KM>
        <Vmax evidence="1">2.1 umol/min/mg enzyme</Vmax>
    </kinetics>
</comment>
<comment type="subunit">
    <text evidence="1">The L-carnitine:THF methyl transfer system is composed of two methyltransferases, MtcB and MtqA, and the corrinoid protein MtqC.</text>
</comment>
<comment type="induction">
    <text evidence="1">Up-regulated during growth on L-carnitine.</text>
</comment>
<comment type="similarity">
    <text evidence="3">Belongs to the trimethylamine methyltransferase family.</text>
</comment>
<evidence type="ECO:0000269" key="1">
    <source>
    </source>
</evidence>
<evidence type="ECO:0000303" key="2">
    <source>
    </source>
</evidence>
<evidence type="ECO:0000305" key="3"/>
<evidence type="ECO:0000312" key="4">
    <source>
        <dbReference type="EMBL" id="ARD64884.1"/>
    </source>
</evidence>